<accession>A0RMR7</accession>
<protein>
    <recommendedName>
        <fullName evidence="1">4-hydroxy-tetrahydrodipicolinate reductase</fullName>
        <shortName evidence="1">HTPA reductase</shortName>
        <ecNumber evidence="1">1.17.1.8</ecNumber>
    </recommendedName>
</protein>
<reference key="1">
    <citation type="submission" date="2006-11" db="EMBL/GenBank/DDBJ databases">
        <title>Sequence of Campylobacter fetus subsp. fetus 82-40.</title>
        <authorList>
            <person name="Fouts D.E."/>
            <person name="Nelson K.E."/>
        </authorList>
    </citation>
    <scope>NUCLEOTIDE SEQUENCE [LARGE SCALE GENOMIC DNA]</scope>
    <source>
        <strain>82-40</strain>
    </source>
</reference>
<organism>
    <name type="scientific">Campylobacter fetus subsp. fetus (strain 82-40)</name>
    <dbReference type="NCBI Taxonomy" id="360106"/>
    <lineage>
        <taxon>Bacteria</taxon>
        <taxon>Pseudomonadati</taxon>
        <taxon>Campylobacterota</taxon>
        <taxon>Epsilonproteobacteria</taxon>
        <taxon>Campylobacterales</taxon>
        <taxon>Campylobacteraceae</taxon>
        <taxon>Campylobacter</taxon>
    </lineage>
</organism>
<gene>
    <name evidence="1" type="primary">dapB</name>
    <name type="ordered locus">CFF8240_0298</name>
</gene>
<name>DAPB_CAMFF</name>
<feature type="chain" id="PRO_1000008551" description="4-hydroxy-tetrahydrodipicolinate reductase">
    <location>
        <begin position="1"/>
        <end position="254"/>
    </location>
</feature>
<feature type="active site" description="Proton donor/acceptor" evidence="1">
    <location>
        <position position="143"/>
    </location>
</feature>
<feature type="active site" description="Proton donor" evidence="1">
    <location>
        <position position="147"/>
    </location>
</feature>
<feature type="binding site" evidence="1">
    <location>
        <begin position="8"/>
        <end position="13"/>
    </location>
    <ligand>
        <name>NAD(+)</name>
        <dbReference type="ChEBI" id="CHEBI:57540"/>
    </ligand>
</feature>
<feature type="binding site" evidence="1">
    <location>
        <begin position="87"/>
        <end position="89"/>
    </location>
    <ligand>
        <name>NAD(+)</name>
        <dbReference type="ChEBI" id="CHEBI:57540"/>
    </ligand>
</feature>
<feature type="binding site" evidence="1">
    <location>
        <begin position="111"/>
        <end position="114"/>
    </location>
    <ligand>
        <name>NAD(+)</name>
        <dbReference type="ChEBI" id="CHEBI:57540"/>
    </ligand>
</feature>
<feature type="binding site" evidence="1">
    <location>
        <position position="144"/>
    </location>
    <ligand>
        <name>(S)-2,3,4,5-tetrahydrodipicolinate</name>
        <dbReference type="ChEBI" id="CHEBI:16845"/>
    </ligand>
</feature>
<feature type="binding site" evidence="1">
    <location>
        <begin position="153"/>
        <end position="154"/>
    </location>
    <ligand>
        <name>(S)-2,3,4,5-tetrahydrodipicolinate</name>
        <dbReference type="ChEBI" id="CHEBI:16845"/>
    </ligand>
</feature>
<keyword id="KW-0028">Amino-acid biosynthesis</keyword>
<keyword id="KW-0963">Cytoplasm</keyword>
<keyword id="KW-0220">Diaminopimelate biosynthesis</keyword>
<keyword id="KW-0457">Lysine biosynthesis</keyword>
<keyword id="KW-0520">NAD</keyword>
<keyword id="KW-0521">NADP</keyword>
<keyword id="KW-0560">Oxidoreductase</keyword>
<dbReference type="EC" id="1.17.1.8" evidence="1"/>
<dbReference type="EMBL" id="CP000487">
    <property type="protein sequence ID" value="ABK81775.1"/>
    <property type="molecule type" value="Genomic_DNA"/>
</dbReference>
<dbReference type="RefSeq" id="WP_011731767.1">
    <property type="nucleotide sequence ID" value="NC_008599.1"/>
</dbReference>
<dbReference type="SMR" id="A0RMR7"/>
<dbReference type="GeneID" id="61064142"/>
<dbReference type="KEGG" id="cff:CFF8240_0298"/>
<dbReference type="PATRIC" id="fig|360106.6.peg.293"/>
<dbReference type="eggNOG" id="COG0289">
    <property type="taxonomic scope" value="Bacteria"/>
</dbReference>
<dbReference type="HOGENOM" id="CLU_047479_2_2_7"/>
<dbReference type="UniPathway" id="UPA00034">
    <property type="reaction ID" value="UER00018"/>
</dbReference>
<dbReference type="Proteomes" id="UP000000760">
    <property type="component" value="Chromosome"/>
</dbReference>
<dbReference type="GO" id="GO:0005829">
    <property type="term" value="C:cytosol"/>
    <property type="evidence" value="ECO:0007669"/>
    <property type="project" value="TreeGrafter"/>
</dbReference>
<dbReference type="GO" id="GO:0008839">
    <property type="term" value="F:4-hydroxy-tetrahydrodipicolinate reductase"/>
    <property type="evidence" value="ECO:0007669"/>
    <property type="project" value="UniProtKB-EC"/>
</dbReference>
<dbReference type="GO" id="GO:0051287">
    <property type="term" value="F:NAD binding"/>
    <property type="evidence" value="ECO:0007669"/>
    <property type="project" value="UniProtKB-UniRule"/>
</dbReference>
<dbReference type="GO" id="GO:0050661">
    <property type="term" value="F:NADP binding"/>
    <property type="evidence" value="ECO:0007669"/>
    <property type="project" value="UniProtKB-UniRule"/>
</dbReference>
<dbReference type="GO" id="GO:0016726">
    <property type="term" value="F:oxidoreductase activity, acting on CH or CH2 groups, NAD or NADP as acceptor"/>
    <property type="evidence" value="ECO:0007669"/>
    <property type="project" value="UniProtKB-UniRule"/>
</dbReference>
<dbReference type="GO" id="GO:0019877">
    <property type="term" value="P:diaminopimelate biosynthetic process"/>
    <property type="evidence" value="ECO:0007669"/>
    <property type="project" value="UniProtKB-UniRule"/>
</dbReference>
<dbReference type="GO" id="GO:0009089">
    <property type="term" value="P:lysine biosynthetic process via diaminopimelate"/>
    <property type="evidence" value="ECO:0007669"/>
    <property type="project" value="UniProtKB-UniRule"/>
</dbReference>
<dbReference type="CDD" id="cd02274">
    <property type="entry name" value="DHDPR_N"/>
    <property type="match status" value="1"/>
</dbReference>
<dbReference type="FunFam" id="3.30.360.10:FF:000004">
    <property type="entry name" value="4-hydroxy-tetrahydrodipicolinate reductase"/>
    <property type="match status" value="1"/>
</dbReference>
<dbReference type="Gene3D" id="3.30.360.10">
    <property type="entry name" value="Dihydrodipicolinate Reductase, domain 2"/>
    <property type="match status" value="1"/>
</dbReference>
<dbReference type="Gene3D" id="3.40.50.720">
    <property type="entry name" value="NAD(P)-binding Rossmann-like Domain"/>
    <property type="match status" value="1"/>
</dbReference>
<dbReference type="HAMAP" id="MF_00102">
    <property type="entry name" value="DapB"/>
    <property type="match status" value="1"/>
</dbReference>
<dbReference type="InterPro" id="IPR022663">
    <property type="entry name" value="DapB_C"/>
</dbReference>
<dbReference type="InterPro" id="IPR000846">
    <property type="entry name" value="DapB_N"/>
</dbReference>
<dbReference type="InterPro" id="IPR022664">
    <property type="entry name" value="DapB_N_CS"/>
</dbReference>
<dbReference type="InterPro" id="IPR023940">
    <property type="entry name" value="DHDPR_bac"/>
</dbReference>
<dbReference type="InterPro" id="IPR036291">
    <property type="entry name" value="NAD(P)-bd_dom_sf"/>
</dbReference>
<dbReference type="NCBIfam" id="TIGR00036">
    <property type="entry name" value="dapB"/>
    <property type="match status" value="1"/>
</dbReference>
<dbReference type="PANTHER" id="PTHR20836:SF0">
    <property type="entry name" value="4-HYDROXY-TETRAHYDRODIPICOLINATE REDUCTASE 1, CHLOROPLASTIC-RELATED"/>
    <property type="match status" value="1"/>
</dbReference>
<dbReference type="PANTHER" id="PTHR20836">
    <property type="entry name" value="DIHYDRODIPICOLINATE REDUCTASE"/>
    <property type="match status" value="1"/>
</dbReference>
<dbReference type="Pfam" id="PF05173">
    <property type="entry name" value="DapB_C"/>
    <property type="match status" value="1"/>
</dbReference>
<dbReference type="Pfam" id="PF01113">
    <property type="entry name" value="DapB_N"/>
    <property type="match status" value="1"/>
</dbReference>
<dbReference type="PIRSF" id="PIRSF000161">
    <property type="entry name" value="DHPR"/>
    <property type="match status" value="1"/>
</dbReference>
<dbReference type="SUPFAM" id="SSF55347">
    <property type="entry name" value="Glyceraldehyde-3-phosphate dehydrogenase-like, C-terminal domain"/>
    <property type="match status" value="1"/>
</dbReference>
<dbReference type="SUPFAM" id="SSF51735">
    <property type="entry name" value="NAD(P)-binding Rossmann-fold domains"/>
    <property type="match status" value="1"/>
</dbReference>
<dbReference type="PROSITE" id="PS01298">
    <property type="entry name" value="DAPB"/>
    <property type="match status" value="1"/>
</dbReference>
<comment type="function">
    <text evidence="1">Catalyzes the conversion of 4-hydroxy-tetrahydrodipicolinate (HTPA) to tetrahydrodipicolinate.</text>
</comment>
<comment type="catalytic activity">
    <reaction evidence="1">
        <text>(S)-2,3,4,5-tetrahydrodipicolinate + NAD(+) + H2O = (2S,4S)-4-hydroxy-2,3,4,5-tetrahydrodipicolinate + NADH + H(+)</text>
        <dbReference type="Rhea" id="RHEA:35323"/>
        <dbReference type="ChEBI" id="CHEBI:15377"/>
        <dbReference type="ChEBI" id="CHEBI:15378"/>
        <dbReference type="ChEBI" id="CHEBI:16845"/>
        <dbReference type="ChEBI" id="CHEBI:57540"/>
        <dbReference type="ChEBI" id="CHEBI:57945"/>
        <dbReference type="ChEBI" id="CHEBI:67139"/>
        <dbReference type="EC" id="1.17.1.8"/>
    </reaction>
</comment>
<comment type="catalytic activity">
    <reaction evidence="1">
        <text>(S)-2,3,4,5-tetrahydrodipicolinate + NADP(+) + H2O = (2S,4S)-4-hydroxy-2,3,4,5-tetrahydrodipicolinate + NADPH + H(+)</text>
        <dbReference type="Rhea" id="RHEA:35331"/>
        <dbReference type="ChEBI" id="CHEBI:15377"/>
        <dbReference type="ChEBI" id="CHEBI:15378"/>
        <dbReference type="ChEBI" id="CHEBI:16845"/>
        <dbReference type="ChEBI" id="CHEBI:57783"/>
        <dbReference type="ChEBI" id="CHEBI:58349"/>
        <dbReference type="ChEBI" id="CHEBI:67139"/>
        <dbReference type="EC" id="1.17.1.8"/>
    </reaction>
</comment>
<comment type="pathway">
    <text evidence="1">Amino-acid biosynthesis; L-lysine biosynthesis via DAP pathway; (S)-tetrahydrodipicolinate from L-aspartate: step 4/4.</text>
</comment>
<comment type="subcellular location">
    <subcellularLocation>
        <location evidence="1">Cytoplasm</location>
    </subcellularLocation>
</comment>
<comment type="similarity">
    <text evidence="1">Belongs to the DapB family.</text>
</comment>
<comment type="caution">
    <text evidence="2">Was originally thought to be a dihydrodipicolinate reductase (DHDPR), catalyzing the conversion of dihydrodipicolinate to tetrahydrodipicolinate. However, it was shown in E.coli that the substrate of the enzymatic reaction is not dihydrodipicolinate (DHDP) but in fact (2S,4S)-4-hydroxy-2,3,4,5-tetrahydrodipicolinic acid (HTPA), the product released by the DapA-catalyzed reaction.</text>
</comment>
<sequence length="254" mass="27421">MIRIGIHGASGKMGYEIISNLKNNEQAILSVAYTIEPMPFDVGDAIVTNDLKTLFDNSDVIIDFSIKDGAVNLINYARTNPKPLIIGTTGLGSEGDELIKLASSVMPILQATNMSLGVAVLNRLTEFASRVLDGFDIEIVEMHHRRKVDAPSGTALTLATHAAKARNLTLDSVRVSGRDGMIGARSKDEIAVMSLRGGDIVGRHTVGFYNDGEFIELNHTATSRATFAKGAIKAAIWIKSKEPKLYSIYDCLGL</sequence>
<evidence type="ECO:0000255" key="1">
    <source>
        <dbReference type="HAMAP-Rule" id="MF_00102"/>
    </source>
</evidence>
<evidence type="ECO:0000305" key="2"/>
<proteinExistence type="inferred from homology"/>